<feature type="chain" id="PRO_0000046964" description="Protein hunchback">
    <location>
        <begin position="1" status="less than"/>
        <end position="192" status="greater than"/>
    </location>
</feature>
<feature type="region of interest" description="Disordered" evidence="2">
    <location>
        <begin position="16"/>
        <end position="54"/>
    </location>
</feature>
<feature type="region of interest" description="Disordered" evidence="2">
    <location>
        <begin position="152"/>
        <end position="192"/>
    </location>
</feature>
<feature type="compositionally biased region" description="Basic residues" evidence="2">
    <location>
        <begin position="17"/>
        <end position="28"/>
    </location>
</feature>
<feature type="compositionally biased region" description="Low complexity" evidence="2">
    <location>
        <begin position="32"/>
        <end position="41"/>
    </location>
</feature>
<feature type="compositionally biased region" description="Basic and acidic residues" evidence="2">
    <location>
        <begin position="173"/>
        <end position="192"/>
    </location>
</feature>
<feature type="non-consecutive residues" evidence="3">
    <location>
        <begin position="97"/>
        <end position="98"/>
    </location>
</feature>
<feature type="non-terminal residue">
    <location>
        <position position="1"/>
    </location>
</feature>
<feature type="non-terminal residue">
    <location>
        <position position="192"/>
    </location>
</feature>
<sequence length="192" mass="21089">WYSSMFAANIKQEPISHHHHHHHAHHSHHADSNSNASSPHQSPLPSPNPPSNTNLQLEQYLKQQQQQQQQHQQQQQPMDTLCAAAMTPSPSNNDQNSPLMWSGLPNPMQTIMPANMRPSPTAATAATTTELCAPTTTTAAIALQANDKLQALTPPMDVTPPKSPAKSQQSCAEPEKEHDLMSNSSEDMKYMA</sequence>
<protein>
    <recommendedName>
        <fullName>Protein hunchback</fullName>
    </recommendedName>
</protein>
<reference key="1">
    <citation type="journal article" date="1997" name="Syst. Biol.">
        <title>Multiple sources of character information and the phylogeny of Hawaiian Drosophilids.</title>
        <authorList>
            <person name="Baker R.H."/>
            <person name="DeSalle R."/>
        </authorList>
    </citation>
    <scope>NUCLEOTIDE SEQUENCE [GENOMIC DNA]</scope>
</reference>
<dbReference type="EMBL" id="U93024">
    <property type="protein sequence ID" value="AAC03272.1"/>
    <property type="molecule type" value="Genomic_DNA"/>
</dbReference>
<dbReference type="EMBL" id="U93025">
    <property type="protein sequence ID" value="AAC03273.1"/>
    <property type="molecule type" value="Genomic_DNA"/>
</dbReference>
<dbReference type="GO" id="GO:0005634">
    <property type="term" value="C:nucleus"/>
    <property type="evidence" value="ECO:0007669"/>
    <property type="project" value="UniProtKB-SubCell"/>
</dbReference>
<dbReference type="GO" id="GO:0003677">
    <property type="term" value="F:DNA binding"/>
    <property type="evidence" value="ECO:0007669"/>
    <property type="project" value="UniProtKB-KW"/>
</dbReference>
<dbReference type="GO" id="GO:0008270">
    <property type="term" value="F:zinc ion binding"/>
    <property type="evidence" value="ECO:0007669"/>
    <property type="project" value="UniProtKB-KW"/>
</dbReference>
<dbReference type="GO" id="GO:0035282">
    <property type="term" value="P:segmentation"/>
    <property type="evidence" value="ECO:0007669"/>
    <property type="project" value="UniProtKB-KW"/>
</dbReference>
<comment type="function">
    <text evidence="1">Gap class segmentation protein that controls development of head structures.</text>
</comment>
<comment type="subcellular location">
    <subcellularLocation>
        <location evidence="1">Nucleus</location>
    </subcellularLocation>
</comment>
<comment type="similarity">
    <text evidence="3">Belongs to the hunchback C2H2-type zinc-finger protein family.</text>
</comment>
<gene>
    <name type="primary">hb</name>
</gene>
<name>HUNB_DROTA</name>
<proteinExistence type="inferred from homology"/>
<keyword id="KW-0217">Developmental protein</keyword>
<keyword id="KW-0238">DNA-binding</keyword>
<keyword id="KW-0302">Gap protein</keyword>
<keyword id="KW-0479">Metal-binding</keyword>
<keyword id="KW-0539">Nucleus</keyword>
<keyword id="KW-0677">Repeat</keyword>
<keyword id="KW-0862">Zinc</keyword>
<keyword id="KW-0863">Zinc-finger</keyword>
<evidence type="ECO:0000250" key="1"/>
<evidence type="ECO:0000256" key="2">
    <source>
        <dbReference type="SAM" id="MobiDB-lite"/>
    </source>
</evidence>
<evidence type="ECO:0000305" key="3"/>
<accession>O46260</accession>
<accession>O46261</accession>
<organism>
    <name type="scientific">Drosophila tanythrix</name>
    <name type="common">Fruit fly</name>
    <dbReference type="NCBI Taxonomy" id="46827"/>
    <lineage>
        <taxon>Eukaryota</taxon>
        <taxon>Metazoa</taxon>
        <taxon>Ecdysozoa</taxon>
        <taxon>Arthropoda</taxon>
        <taxon>Hexapoda</taxon>
        <taxon>Insecta</taxon>
        <taxon>Pterygota</taxon>
        <taxon>Neoptera</taxon>
        <taxon>Endopterygota</taxon>
        <taxon>Diptera</taxon>
        <taxon>Brachycera</taxon>
        <taxon>Muscomorpha</taxon>
        <taxon>Ephydroidea</taxon>
        <taxon>Drosophilidae</taxon>
        <taxon>Drosophila</taxon>
        <taxon>Hawaiian Drosophila</taxon>
    </lineage>
</organism>